<feature type="chain" id="PRO_0000228563" description="Ribonuclease 3">
    <location>
        <begin position="1"/>
        <end position="224"/>
    </location>
</feature>
<feature type="domain" description="RNase III" evidence="1">
    <location>
        <begin position="5"/>
        <end position="127"/>
    </location>
</feature>
<feature type="domain" description="DRBM" evidence="1">
    <location>
        <begin position="154"/>
        <end position="224"/>
    </location>
</feature>
<feature type="active site" evidence="1">
    <location>
        <position position="44"/>
    </location>
</feature>
<feature type="active site" evidence="1">
    <location>
        <position position="116"/>
    </location>
</feature>
<feature type="binding site" evidence="1">
    <location>
        <position position="40"/>
    </location>
    <ligand>
        <name>Mg(2+)</name>
        <dbReference type="ChEBI" id="CHEBI:18420"/>
    </ligand>
</feature>
<feature type="binding site" evidence="1">
    <location>
        <position position="113"/>
    </location>
    <ligand>
        <name>Mg(2+)</name>
        <dbReference type="ChEBI" id="CHEBI:18420"/>
    </ligand>
</feature>
<feature type="binding site" evidence="1">
    <location>
        <position position="116"/>
    </location>
    <ligand>
        <name>Mg(2+)</name>
        <dbReference type="ChEBI" id="CHEBI:18420"/>
    </ligand>
</feature>
<evidence type="ECO:0000255" key="1">
    <source>
        <dbReference type="HAMAP-Rule" id="MF_00104"/>
    </source>
</evidence>
<comment type="function">
    <text evidence="1">Digests double-stranded RNA. Involved in the processing of primary rRNA transcript to yield the immediate precursors to the large and small rRNAs (23S and 16S). Processes some mRNAs, and tRNAs when they are encoded in the rRNA operon. Processes pre-crRNA and tracrRNA of type II CRISPR loci if present in the organism.</text>
</comment>
<comment type="catalytic activity">
    <reaction evidence="1">
        <text>Endonucleolytic cleavage to 5'-phosphomonoester.</text>
        <dbReference type="EC" id="3.1.26.3"/>
    </reaction>
</comment>
<comment type="cofactor">
    <cofactor evidence="1">
        <name>Mg(2+)</name>
        <dbReference type="ChEBI" id="CHEBI:18420"/>
    </cofactor>
</comment>
<comment type="subunit">
    <text evidence="1">Homodimer.</text>
</comment>
<comment type="subcellular location">
    <subcellularLocation>
        <location evidence="1">Cytoplasm</location>
    </subcellularLocation>
</comment>
<comment type="similarity">
    <text evidence="1">Belongs to the ribonuclease III family.</text>
</comment>
<proteinExistence type="inferred from homology"/>
<keyword id="KW-0963">Cytoplasm</keyword>
<keyword id="KW-0255">Endonuclease</keyword>
<keyword id="KW-0378">Hydrolase</keyword>
<keyword id="KW-0460">Magnesium</keyword>
<keyword id="KW-0479">Metal-binding</keyword>
<keyword id="KW-0507">mRNA processing</keyword>
<keyword id="KW-0540">Nuclease</keyword>
<keyword id="KW-1185">Reference proteome</keyword>
<keyword id="KW-0694">RNA-binding</keyword>
<keyword id="KW-0698">rRNA processing</keyword>
<keyword id="KW-0699">rRNA-binding</keyword>
<keyword id="KW-0819">tRNA processing</keyword>
<protein>
    <recommendedName>
        <fullName evidence="1">Ribonuclease 3</fullName>
        <ecNumber evidence="1">3.1.26.3</ecNumber>
    </recommendedName>
    <alternativeName>
        <fullName evidence="1">Ribonuclease III</fullName>
        <shortName evidence="1">RNase III</shortName>
    </alternativeName>
</protein>
<organism>
    <name type="scientific">Photobacterium profundum (strain SS9)</name>
    <dbReference type="NCBI Taxonomy" id="298386"/>
    <lineage>
        <taxon>Bacteria</taxon>
        <taxon>Pseudomonadati</taxon>
        <taxon>Pseudomonadota</taxon>
        <taxon>Gammaproteobacteria</taxon>
        <taxon>Vibrionales</taxon>
        <taxon>Vibrionaceae</taxon>
        <taxon>Photobacterium</taxon>
    </lineage>
</organism>
<sequence>MTSPANRLQRRLGYQFNSSELMTLSLTHRSANGKHNERLEFLGDSILSFVIADDLYHRFPHVDEGDMSRMRATLVRGKTLAELGREFELGDYLLLGPGELKSGGFRRDSILADCVEAIIGAIYLDSDTEQVRKVILSWYQSRLETIQPGINQKDPKTRLQECLQGRRLALPAYTVTKVHGEAHNQEFTVQCEVTGLDKPVIGKGSSRRKAEQAAAELALKQLES</sequence>
<name>RNC_PHOPR</name>
<reference key="1">
    <citation type="journal article" date="2005" name="Science">
        <title>Life at depth: Photobacterium profundum genome sequence and expression analysis.</title>
        <authorList>
            <person name="Vezzi A."/>
            <person name="Campanaro S."/>
            <person name="D'Angelo M."/>
            <person name="Simonato F."/>
            <person name="Vitulo N."/>
            <person name="Lauro F.M."/>
            <person name="Cestaro A."/>
            <person name="Malacrida G."/>
            <person name="Simionati B."/>
            <person name="Cannata N."/>
            <person name="Romualdi C."/>
            <person name="Bartlett D.H."/>
            <person name="Valle G."/>
        </authorList>
    </citation>
    <scope>NUCLEOTIDE SEQUENCE [LARGE SCALE GENOMIC DNA]</scope>
    <source>
        <strain>ATCC BAA-1253 / SS9</strain>
    </source>
</reference>
<dbReference type="EC" id="3.1.26.3" evidence="1"/>
<dbReference type="EMBL" id="CR378673">
    <property type="protein sequence ID" value="CAG21405.1"/>
    <property type="molecule type" value="Genomic_DNA"/>
</dbReference>
<dbReference type="RefSeq" id="WP_011219664.1">
    <property type="nucleotide sequence ID" value="NC_006370.1"/>
</dbReference>
<dbReference type="SMR" id="Q6LMS2"/>
<dbReference type="STRING" id="298386.PBPRA3089"/>
<dbReference type="KEGG" id="ppr:PBPRA3089"/>
<dbReference type="eggNOG" id="COG0571">
    <property type="taxonomic scope" value="Bacteria"/>
</dbReference>
<dbReference type="HOGENOM" id="CLU_000907_1_1_6"/>
<dbReference type="Proteomes" id="UP000000593">
    <property type="component" value="Chromosome 1"/>
</dbReference>
<dbReference type="GO" id="GO:0005737">
    <property type="term" value="C:cytoplasm"/>
    <property type="evidence" value="ECO:0007669"/>
    <property type="project" value="UniProtKB-SubCell"/>
</dbReference>
<dbReference type="GO" id="GO:0003725">
    <property type="term" value="F:double-stranded RNA binding"/>
    <property type="evidence" value="ECO:0007669"/>
    <property type="project" value="TreeGrafter"/>
</dbReference>
<dbReference type="GO" id="GO:0046872">
    <property type="term" value="F:metal ion binding"/>
    <property type="evidence" value="ECO:0007669"/>
    <property type="project" value="UniProtKB-KW"/>
</dbReference>
<dbReference type="GO" id="GO:0004525">
    <property type="term" value="F:ribonuclease III activity"/>
    <property type="evidence" value="ECO:0007669"/>
    <property type="project" value="UniProtKB-UniRule"/>
</dbReference>
<dbReference type="GO" id="GO:0019843">
    <property type="term" value="F:rRNA binding"/>
    <property type="evidence" value="ECO:0007669"/>
    <property type="project" value="UniProtKB-KW"/>
</dbReference>
<dbReference type="GO" id="GO:0006397">
    <property type="term" value="P:mRNA processing"/>
    <property type="evidence" value="ECO:0007669"/>
    <property type="project" value="UniProtKB-UniRule"/>
</dbReference>
<dbReference type="GO" id="GO:0010468">
    <property type="term" value="P:regulation of gene expression"/>
    <property type="evidence" value="ECO:0007669"/>
    <property type="project" value="TreeGrafter"/>
</dbReference>
<dbReference type="GO" id="GO:0006364">
    <property type="term" value="P:rRNA processing"/>
    <property type="evidence" value="ECO:0007669"/>
    <property type="project" value="UniProtKB-UniRule"/>
</dbReference>
<dbReference type="GO" id="GO:0008033">
    <property type="term" value="P:tRNA processing"/>
    <property type="evidence" value="ECO:0007669"/>
    <property type="project" value="UniProtKB-KW"/>
</dbReference>
<dbReference type="CDD" id="cd10845">
    <property type="entry name" value="DSRM_RNAse_III_family"/>
    <property type="match status" value="1"/>
</dbReference>
<dbReference type="CDD" id="cd00593">
    <property type="entry name" value="RIBOc"/>
    <property type="match status" value="1"/>
</dbReference>
<dbReference type="FunFam" id="1.10.1520.10:FF:000001">
    <property type="entry name" value="Ribonuclease 3"/>
    <property type="match status" value="1"/>
</dbReference>
<dbReference type="FunFam" id="3.30.160.20:FF:000003">
    <property type="entry name" value="Ribonuclease 3"/>
    <property type="match status" value="1"/>
</dbReference>
<dbReference type="Gene3D" id="3.30.160.20">
    <property type="match status" value="1"/>
</dbReference>
<dbReference type="Gene3D" id="1.10.1520.10">
    <property type="entry name" value="Ribonuclease III domain"/>
    <property type="match status" value="1"/>
</dbReference>
<dbReference type="HAMAP" id="MF_00104">
    <property type="entry name" value="RNase_III"/>
    <property type="match status" value="1"/>
</dbReference>
<dbReference type="InterPro" id="IPR014720">
    <property type="entry name" value="dsRBD_dom"/>
</dbReference>
<dbReference type="InterPro" id="IPR011907">
    <property type="entry name" value="RNase_III"/>
</dbReference>
<dbReference type="InterPro" id="IPR000999">
    <property type="entry name" value="RNase_III_dom"/>
</dbReference>
<dbReference type="InterPro" id="IPR036389">
    <property type="entry name" value="RNase_III_sf"/>
</dbReference>
<dbReference type="NCBIfam" id="TIGR02191">
    <property type="entry name" value="RNaseIII"/>
    <property type="match status" value="1"/>
</dbReference>
<dbReference type="PANTHER" id="PTHR11207:SF0">
    <property type="entry name" value="RIBONUCLEASE 3"/>
    <property type="match status" value="1"/>
</dbReference>
<dbReference type="PANTHER" id="PTHR11207">
    <property type="entry name" value="RIBONUCLEASE III"/>
    <property type="match status" value="1"/>
</dbReference>
<dbReference type="Pfam" id="PF00035">
    <property type="entry name" value="dsrm"/>
    <property type="match status" value="1"/>
</dbReference>
<dbReference type="Pfam" id="PF14622">
    <property type="entry name" value="Ribonucleas_3_3"/>
    <property type="match status" value="1"/>
</dbReference>
<dbReference type="SMART" id="SM00358">
    <property type="entry name" value="DSRM"/>
    <property type="match status" value="1"/>
</dbReference>
<dbReference type="SMART" id="SM00535">
    <property type="entry name" value="RIBOc"/>
    <property type="match status" value="1"/>
</dbReference>
<dbReference type="SUPFAM" id="SSF54768">
    <property type="entry name" value="dsRNA-binding domain-like"/>
    <property type="match status" value="1"/>
</dbReference>
<dbReference type="SUPFAM" id="SSF69065">
    <property type="entry name" value="RNase III domain-like"/>
    <property type="match status" value="1"/>
</dbReference>
<dbReference type="PROSITE" id="PS50137">
    <property type="entry name" value="DS_RBD"/>
    <property type="match status" value="1"/>
</dbReference>
<dbReference type="PROSITE" id="PS00517">
    <property type="entry name" value="RNASE_3_1"/>
    <property type="match status" value="1"/>
</dbReference>
<dbReference type="PROSITE" id="PS50142">
    <property type="entry name" value="RNASE_3_2"/>
    <property type="match status" value="1"/>
</dbReference>
<gene>
    <name evidence="1" type="primary">rnc</name>
    <name type="ordered locus">PBPRA3089</name>
</gene>
<accession>Q6LMS2</accession>